<protein>
    <recommendedName>
        <fullName evidence="2">HTH-type transcriptional regulator BetI</fullName>
    </recommendedName>
</protein>
<accession>C3K3D1</accession>
<reference key="1">
    <citation type="journal article" date="2009" name="Genome Biol.">
        <title>Genomic and genetic analyses of diversity and plant interactions of Pseudomonas fluorescens.</title>
        <authorList>
            <person name="Silby M.W."/>
            <person name="Cerdeno-Tarraga A.M."/>
            <person name="Vernikos G.S."/>
            <person name="Giddens S.R."/>
            <person name="Jackson R.W."/>
            <person name="Preston G.M."/>
            <person name="Zhang X.-X."/>
            <person name="Moon C.D."/>
            <person name="Gehrig S.M."/>
            <person name="Godfrey S.A.C."/>
            <person name="Knight C.G."/>
            <person name="Malone J.G."/>
            <person name="Robinson Z."/>
            <person name="Spiers A.J."/>
            <person name="Harris S."/>
            <person name="Challis G.L."/>
            <person name="Yaxley A.M."/>
            <person name="Harris D."/>
            <person name="Seeger K."/>
            <person name="Murphy L."/>
            <person name="Rutter S."/>
            <person name="Squares R."/>
            <person name="Quail M.A."/>
            <person name="Saunders E."/>
            <person name="Mavromatis K."/>
            <person name="Brettin T.S."/>
            <person name="Bentley S.D."/>
            <person name="Hothersall J."/>
            <person name="Stephens E."/>
            <person name="Thomas C.M."/>
            <person name="Parkhill J."/>
            <person name="Levy S.B."/>
            <person name="Rainey P.B."/>
            <person name="Thomson N.R."/>
        </authorList>
    </citation>
    <scope>NUCLEOTIDE SEQUENCE [LARGE SCALE GENOMIC DNA]</scope>
    <source>
        <strain>SBW25</strain>
    </source>
</reference>
<dbReference type="EMBL" id="AM181176">
    <property type="protein sequence ID" value="CAY53020.1"/>
    <property type="molecule type" value="Genomic_DNA"/>
</dbReference>
<dbReference type="RefSeq" id="WP_015886274.1">
    <property type="nucleotide sequence ID" value="NC_012660.1"/>
</dbReference>
<dbReference type="SMR" id="C3K3D1"/>
<dbReference type="STRING" id="294.SRM1_05336"/>
<dbReference type="GeneID" id="93467316"/>
<dbReference type="eggNOG" id="COG1309">
    <property type="taxonomic scope" value="Bacteria"/>
</dbReference>
<dbReference type="HOGENOM" id="CLU_069356_15_4_6"/>
<dbReference type="OrthoDB" id="7618612at2"/>
<dbReference type="UniPathway" id="UPA00529"/>
<dbReference type="GO" id="GO:0003700">
    <property type="term" value="F:DNA-binding transcription factor activity"/>
    <property type="evidence" value="ECO:0007669"/>
    <property type="project" value="UniProtKB-UniRule"/>
</dbReference>
<dbReference type="GO" id="GO:0000976">
    <property type="term" value="F:transcription cis-regulatory region binding"/>
    <property type="evidence" value="ECO:0007669"/>
    <property type="project" value="TreeGrafter"/>
</dbReference>
<dbReference type="GO" id="GO:0019285">
    <property type="term" value="P:glycine betaine biosynthetic process from choline"/>
    <property type="evidence" value="ECO:0007669"/>
    <property type="project" value="UniProtKB-UniRule"/>
</dbReference>
<dbReference type="GO" id="GO:0045892">
    <property type="term" value="P:negative regulation of DNA-templated transcription"/>
    <property type="evidence" value="ECO:0007669"/>
    <property type="project" value="UniProtKB-UniRule"/>
</dbReference>
<dbReference type="Gene3D" id="1.10.357.10">
    <property type="entry name" value="Tetracycline Repressor, domain 2"/>
    <property type="match status" value="1"/>
</dbReference>
<dbReference type="HAMAP" id="MF_00768">
    <property type="entry name" value="HTH_type_BetI"/>
    <property type="match status" value="1"/>
</dbReference>
<dbReference type="InterPro" id="IPR039538">
    <property type="entry name" value="BetI_C"/>
</dbReference>
<dbReference type="InterPro" id="IPR023772">
    <property type="entry name" value="DNA-bd_HTH_TetR-type_CS"/>
</dbReference>
<dbReference type="InterPro" id="IPR009057">
    <property type="entry name" value="Homeodomain-like_sf"/>
</dbReference>
<dbReference type="InterPro" id="IPR050109">
    <property type="entry name" value="HTH-type_TetR-like_transc_reg"/>
</dbReference>
<dbReference type="InterPro" id="IPR001647">
    <property type="entry name" value="HTH_TetR"/>
</dbReference>
<dbReference type="InterPro" id="IPR036271">
    <property type="entry name" value="Tet_transcr_reg_TetR-rel_C_sf"/>
</dbReference>
<dbReference type="InterPro" id="IPR017757">
    <property type="entry name" value="Tscrpt_rep_BetI"/>
</dbReference>
<dbReference type="NCBIfam" id="TIGR03384">
    <property type="entry name" value="betaine_BetI"/>
    <property type="match status" value="1"/>
</dbReference>
<dbReference type="NCBIfam" id="NF001978">
    <property type="entry name" value="PRK00767.1"/>
    <property type="match status" value="1"/>
</dbReference>
<dbReference type="PANTHER" id="PTHR30055:SF234">
    <property type="entry name" value="HTH-TYPE TRANSCRIPTIONAL REGULATOR BETI"/>
    <property type="match status" value="1"/>
</dbReference>
<dbReference type="PANTHER" id="PTHR30055">
    <property type="entry name" value="HTH-TYPE TRANSCRIPTIONAL REGULATOR RUTR"/>
    <property type="match status" value="1"/>
</dbReference>
<dbReference type="Pfam" id="PF13977">
    <property type="entry name" value="TetR_C_6"/>
    <property type="match status" value="1"/>
</dbReference>
<dbReference type="Pfam" id="PF00440">
    <property type="entry name" value="TetR_N"/>
    <property type="match status" value="1"/>
</dbReference>
<dbReference type="SUPFAM" id="SSF46689">
    <property type="entry name" value="Homeodomain-like"/>
    <property type="match status" value="1"/>
</dbReference>
<dbReference type="SUPFAM" id="SSF48498">
    <property type="entry name" value="Tetracyclin repressor-like, C-terminal domain"/>
    <property type="match status" value="1"/>
</dbReference>
<dbReference type="PROSITE" id="PS01081">
    <property type="entry name" value="HTH_TETR_1"/>
    <property type="match status" value="1"/>
</dbReference>
<dbReference type="PROSITE" id="PS50977">
    <property type="entry name" value="HTH_TETR_2"/>
    <property type="match status" value="1"/>
</dbReference>
<feature type="chain" id="PRO_1000212897" description="HTH-type transcriptional regulator BetI">
    <location>
        <begin position="1"/>
        <end position="197"/>
    </location>
</feature>
<feature type="domain" description="HTH tetR-type" evidence="2">
    <location>
        <begin position="8"/>
        <end position="68"/>
    </location>
</feature>
<feature type="DNA-binding region" description="H-T-H motif" evidence="2">
    <location>
        <begin position="31"/>
        <end position="50"/>
    </location>
</feature>
<comment type="function">
    <text evidence="1">Repressor involved in the biosynthesis of the osmoprotectant glycine betaine. It represses transcription of the choline transporter BetT and the genes of BetAB involved in the synthesis of glycine betaine (By similarity).</text>
</comment>
<comment type="pathway">
    <text>Amine and polyamine biosynthesis; betaine biosynthesis via choline pathway [regulation].</text>
</comment>
<organism>
    <name type="scientific">Pseudomonas fluorescens (strain SBW25)</name>
    <dbReference type="NCBI Taxonomy" id="216595"/>
    <lineage>
        <taxon>Bacteria</taxon>
        <taxon>Pseudomonadati</taxon>
        <taxon>Pseudomonadota</taxon>
        <taxon>Gammaproteobacteria</taxon>
        <taxon>Pseudomonadales</taxon>
        <taxon>Pseudomonadaceae</taxon>
        <taxon>Pseudomonas</taxon>
    </lineage>
</organism>
<name>BETI_PSEFS</name>
<sequence length="197" mass="22006">MPKVGMQPIRRQQLIEATLTAIDQVGMGDASIALIARLAGVSNGIISHYFKDKNGLIAATMRYLMNALIDNVHERRLALTDDSPRAHLQVIIEGNFDASQVNGPAMKTWLAFWATSMHHPSLHRLQRINDQRLYSNLCCQFRRVLPLPHARKAARGLAALIDGLWLRGALSGDAFDTAQAQRIAYEYMDFQLAKQVS</sequence>
<keyword id="KW-0238">DNA-binding</keyword>
<keyword id="KW-0678">Repressor</keyword>
<keyword id="KW-0804">Transcription</keyword>
<keyword id="KW-0805">Transcription regulation</keyword>
<gene>
    <name evidence="2" type="primary">betI</name>
    <name type="ordered locus">PFLU_5684</name>
</gene>
<evidence type="ECO:0000250" key="1"/>
<evidence type="ECO:0000255" key="2">
    <source>
        <dbReference type="HAMAP-Rule" id="MF_00768"/>
    </source>
</evidence>
<proteinExistence type="inferred from homology"/>